<proteinExistence type="inferred from homology"/>
<organism>
    <name type="scientific">Escherichia coli O81 (strain ED1a)</name>
    <dbReference type="NCBI Taxonomy" id="585397"/>
    <lineage>
        <taxon>Bacteria</taxon>
        <taxon>Pseudomonadati</taxon>
        <taxon>Pseudomonadota</taxon>
        <taxon>Gammaproteobacteria</taxon>
        <taxon>Enterobacterales</taxon>
        <taxon>Enterobacteriaceae</taxon>
        <taxon>Escherichia</taxon>
    </lineage>
</organism>
<dbReference type="EMBL" id="CU928162">
    <property type="protein sequence ID" value="CAR09368.1"/>
    <property type="molecule type" value="Genomic_DNA"/>
</dbReference>
<dbReference type="RefSeq" id="WP_000886078.1">
    <property type="nucleotide sequence ID" value="NC_011745.1"/>
</dbReference>
<dbReference type="SMR" id="B7MZ51"/>
<dbReference type="KEGG" id="ecq:ECED1_3357"/>
<dbReference type="HOGENOM" id="CLU_007884_6_1_6"/>
<dbReference type="Proteomes" id="UP000000748">
    <property type="component" value="Chromosome"/>
</dbReference>
<dbReference type="GO" id="GO:0005737">
    <property type="term" value="C:cytoplasm"/>
    <property type="evidence" value="ECO:0007669"/>
    <property type="project" value="UniProtKB-SubCell"/>
</dbReference>
<dbReference type="GO" id="GO:0005542">
    <property type="term" value="F:folic acid binding"/>
    <property type="evidence" value="ECO:0007669"/>
    <property type="project" value="UniProtKB-UniRule"/>
</dbReference>
<dbReference type="GO" id="GO:0016226">
    <property type="term" value="P:iron-sulfur cluster assembly"/>
    <property type="evidence" value="ECO:0007669"/>
    <property type="project" value="TreeGrafter"/>
</dbReference>
<dbReference type="GO" id="GO:0009451">
    <property type="term" value="P:RNA modification"/>
    <property type="evidence" value="ECO:0007669"/>
    <property type="project" value="InterPro"/>
</dbReference>
<dbReference type="GO" id="GO:0008033">
    <property type="term" value="P:tRNA processing"/>
    <property type="evidence" value="ECO:0007669"/>
    <property type="project" value="UniProtKB-UniRule"/>
</dbReference>
<dbReference type="FunFam" id="2.40.30.160:FF:000001">
    <property type="entry name" value="tRNA-modifying protein YgfZ"/>
    <property type="match status" value="1"/>
</dbReference>
<dbReference type="FunFam" id="3.30.70.1400:FF:000002">
    <property type="entry name" value="tRNA-modifying protein YgfZ"/>
    <property type="match status" value="1"/>
</dbReference>
<dbReference type="FunFam" id="3.30.70.1630:FF:000001">
    <property type="entry name" value="tRNA-modifying protein YgfZ"/>
    <property type="match status" value="1"/>
</dbReference>
<dbReference type="Gene3D" id="2.40.30.160">
    <property type="match status" value="1"/>
</dbReference>
<dbReference type="Gene3D" id="3.30.70.1630">
    <property type="match status" value="1"/>
</dbReference>
<dbReference type="Gene3D" id="3.30.70.1400">
    <property type="entry name" value="Aminomethyltransferase beta-barrel domains"/>
    <property type="match status" value="1"/>
</dbReference>
<dbReference type="HAMAP" id="MF_01175">
    <property type="entry name" value="tRNA_modifying_YgfZ"/>
    <property type="match status" value="1"/>
</dbReference>
<dbReference type="InterPro" id="IPR006222">
    <property type="entry name" value="GCV_T_N"/>
</dbReference>
<dbReference type="InterPro" id="IPR029043">
    <property type="entry name" value="GcvT/YgfZ_C"/>
</dbReference>
<dbReference type="InterPro" id="IPR023758">
    <property type="entry name" value="tRNA-modifying_YgfZ"/>
</dbReference>
<dbReference type="InterPro" id="IPR045179">
    <property type="entry name" value="YgfZ/GcvT"/>
</dbReference>
<dbReference type="InterPro" id="IPR017703">
    <property type="entry name" value="YgfZ/GcvT_CS"/>
</dbReference>
<dbReference type="InterPro" id="IPR048451">
    <property type="entry name" value="YgfZ_barrel"/>
</dbReference>
<dbReference type="NCBIfam" id="NF007110">
    <property type="entry name" value="PRK09559.1"/>
    <property type="match status" value="1"/>
</dbReference>
<dbReference type="NCBIfam" id="TIGR03317">
    <property type="entry name" value="ygfZ_signature"/>
    <property type="match status" value="1"/>
</dbReference>
<dbReference type="PANTHER" id="PTHR22602">
    <property type="entry name" value="TRANSFERASE CAF17, MITOCHONDRIAL-RELATED"/>
    <property type="match status" value="1"/>
</dbReference>
<dbReference type="PANTHER" id="PTHR22602:SF0">
    <property type="entry name" value="TRANSFERASE CAF17, MITOCHONDRIAL-RELATED"/>
    <property type="match status" value="1"/>
</dbReference>
<dbReference type="Pfam" id="PF01571">
    <property type="entry name" value="GCV_T"/>
    <property type="match status" value="1"/>
</dbReference>
<dbReference type="Pfam" id="PF21130">
    <property type="entry name" value="YgfZ_barrel"/>
    <property type="match status" value="1"/>
</dbReference>
<dbReference type="SUPFAM" id="SSF101790">
    <property type="entry name" value="Aminomethyltransferase beta-barrel domain"/>
    <property type="match status" value="1"/>
</dbReference>
<dbReference type="SUPFAM" id="SSF103025">
    <property type="entry name" value="Folate-binding domain"/>
    <property type="match status" value="1"/>
</dbReference>
<evidence type="ECO:0000255" key="1">
    <source>
        <dbReference type="HAMAP-Rule" id="MF_01175"/>
    </source>
</evidence>
<keyword id="KW-0963">Cytoplasm</keyword>
<keyword id="KW-0290">Folate-binding</keyword>
<keyword id="KW-0819">tRNA processing</keyword>
<feature type="chain" id="PRO_1000164411" description="tRNA-modifying protein YgfZ">
    <location>
        <begin position="1"/>
        <end position="326"/>
    </location>
</feature>
<feature type="binding site" evidence="1">
    <location>
        <position position="27"/>
    </location>
    <ligand>
        <name>folate</name>
        <dbReference type="ChEBI" id="CHEBI:62501"/>
    </ligand>
</feature>
<feature type="binding site" evidence="1">
    <location>
        <position position="189"/>
    </location>
    <ligand>
        <name>folate</name>
        <dbReference type="ChEBI" id="CHEBI:62501"/>
    </ligand>
</feature>
<gene>
    <name evidence="1" type="primary">ygfZ</name>
    <name type="ordered locus">ECED1_3357</name>
</gene>
<protein>
    <recommendedName>
        <fullName evidence="1">tRNA-modifying protein YgfZ</fullName>
    </recommendedName>
</protein>
<name>YGFZ_ECO81</name>
<comment type="function">
    <text evidence="1">Folate-binding protein involved in regulating the level of ATP-DnaA and in the modification of some tRNAs. It is probably a key factor in regulatory networks that act via tRNA modification, such as initiation of chromosomal replication.</text>
</comment>
<comment type="subcellular location">
    <subcellularLocation>
        <location evidence="1">Cytoplasm</location>
    </subcellularLocation>
</comment>
<comment type="similarity">
    <text evidence="1">Belongs to the tRNA-modifying YgfZ family.</text>
</comment>
<reference key="1">
    <citation type="journal article" date="2009" name="PLoS Genet.">
        <title>Organised genome dynamics in the Escherichia coli species results in highly diverse adaptive paths.</title>
        <authorList>
            <person name="Touchon M."/>
            <person name="Hoede C."/>
            <person name="Tenaillon O."/>
            <person name="Barbe V."/>
            <person name="Baeriswyl S."/>
            <person name="Bidet P."/>
            <person name="Bingen E."/>
            <person name="Bonacorsi S."/>
            <person name="Bouchier C."/>
            <person name="Bouvet O."/>
            <person name="Calteau A."/>
            <person name="Chiapello H."/>
            <person name="Clermont O."/>
            <person name="Cruveiller S."/>
            <person name="Danchin A."/>
            <person name="Diard M."/>
            <person name="Dossat C."/>
            <person name="Karoui M.E."/>
            <person name="Frapy E."/>
            <person name="Garry L."/>
            <person name="Ghigo J.M."/>
            <person name="Gilles A.M."/>
            <person name="Johnson J."/>
            <person name="Le Bouguenec C."/>
            <person name="Lescat M."/>
            <person name="Mangenot S."/>
            <person name="Martinez-Jehanne V."/>
            <person name="Matic I."/>
            <person name="Nassif X."/>
            <person name="Oztas S."/>
            <person name="Petit M.A."/>
            <person name="Pichon C."/>
            <person name="Rouy Z."/>
            <person name="Ruf C.S."/>
            <person name="Schneider D."/>
            <person name="Tourret J."/>
            <person name="Vacherie B."/>
            <person name="Vallenet D."/>
            <person name="Medigue C."/>
            <person name="Rocha E.P.C."/>
            <person name="Denamur E."/>
        </authorList>
    </citation>
    <scope>NUCLEOTIDE SEQUENCE [LARGE SCALE GENOMIC DNA]</scope>
    <source>
        <strain>ED1a</strain>
    </source>
</reference>
<sequence>MAFTPFPPRQPTASARLPLTLMTLDDWALATITGADSEKYMQGQVTADVSQMTEDQHLLAAHCDAKGKMWSNLRLFRDGDGFAWIERRSVREPQLTELKKYAVFSKVTIAPDDERVLLGVAGFQARAALANLFSELPSREKQVVKEGATTLLWFEHPAERFLIVTDEATANMLTDKLRGEAELNNSQQWLALNIEAGFPVIDAANSGQFIPQATNLQALGGISFKKGCYTGQEMVARAKFRGANKRALWLLKGSASRLPEAGEDLELKMGENWRRTGTVLAAVKLEDGQVVVQVVMNNDMEPDSIFRVRDDANTLRIEPLPYSLEE</sequence>
<accession>B7MZ51</accession>